<gene>
    <name evidence="1" type="primary">rplC</name>
    <name evidence="1" type="synonym">rpl3</name>
    <name type="ordered locus">MAE_57430</name>
</gene>
<organism>
    <name type="scientific">Microcystis aeruginosa (strain NIES-843 / IAM M-2473)</name>
    <dbReference type="NCBI Taxonomy" id="449447"/>
    <lineage>
        <taxon>Bacteria</taxon>
        <taxon>Bacillati</taxon>
        <taxon>Cyanobacteriota</taxon>
        <taxon>Cyanophyceae</taxon>
        <taxon>Oscillatoriophycideae</taxon>
        <taxon>Chroococcales</taxon>
        <taxon>Microcystaceae</taxon>
        <taxon>Microcystis</taxon>
    </lineage>
</organism>
<reference key="1">
    <citation type="journal article" date="2007" name="DNA Res.">
        <title>Complete genomic structure of the bloom-forming toxic cyanobacterium Microcystis aeruginosa NIES-843.</title>
        <authorList>
            <person name="Kaneko T."/>
            <person name="Nakajima N."/>
            <person name="Okamoto S."/>
            <person name="Suzuki I."/>
            <person name="Tanabe Y."/>
            <person name="Tamaoki M."/>
            <person name="Nakamura Y."/>
            <person name="Kasai F."/>
            <person name="Watanabe A."/>
            <person name="Kawashima K."/>
            <person name="Kishida Y."/>
            <person name="Ono A."/>
            <person name="Shimizu Y."/>
            <person name="Takahashi C."/>
            <person name="Minami C."/>
            <person name="Fujishiro T."/>
            <person name="Kohara M."/>
            <person name="Katoh M."/>
            <person name="Nakazaki N."/>
            <person name="Nakayama S."/>
            <person name="Yamada M."/>
            <person name="Tabata S."/>
            <person name="Watanabe M.M."/>
        </authorList>
    </citation>
    <scope>NUCLEOTIDE SEQUENCE [LARGE SCALE GENOMIC DNA]</scope>
    <source>
        <strain>NIES-843 / IAM M-247</strain>
    </source>
</reference>
<comment type="function">
    <text evidence="1">One of the primary rRNA binding proteins, it binds directly near the 3'-end of the 23S rRNA, where it nucleates assembly of the 50S subunit.</text>
</comment>
<comment type="subunit">
    <text evidence="1">Part of the 50S ribosomal subunit. Forms a cluster with proteins L14 and L19.</text>
</comment>
<comment type="similarity">
    <text evidence="1">Belongs to the universal ribosomal protein uL3 family.</text>
</comment>
<proteinExistence type="inferred from homology"/>
<name>RL3_MICAN</name>
<accession>B0JI03</accession>
<keyword id="KW-0687">Ribonucleoprotein</keyword>
<keyword id="KW-0689">Ribosomal protein</keyword>
<keyword id="KW-0694">RNA-binding</keyword>
<keyword id="KW-0699">rRNA-binding</keyword>
<evidence type="ECO:0000255" key="1">
    <source>
        <dbReference type="HAMAP-Rule" id="MF_01325"/>
    </source>
</evidence>
<evidence type="ECO:0000256" key="2">
    <source>
        <dbReference type="SAM" id="MobiDB-lite"/>
    </source>
</evidence>
<evidence type="ECO:0000305" key="3"/>
<feature type="chain" id="PRO_1000086447" description="Large ribosomal subunit protein uL3">
    <location>
        <begin position="1"/>
        <end position="212"/>
    </location>
</feature>
<feature type="region of interest" description="Disordered" evidence="2">
    <location>
        <begin position="131"/>
        <end position="155"/>
    </location>
</feature>
<protein>
    <recommendedName>
        <fullName evidence="1">Large ribosomal subunit protein uL3</fullName>
    </recommendedName>
    <alternativeName>
        <fullName evidence="3">50S ribosomal protein L3</fullName>
    </alternativeName>
</protein>
<dbReference type="EMBL" id="AP009552">
    <property type="protein sequence ID" value="BAG05565.1"/>
    <property type="molecule type" value="Genomic_DNA"/>
</dbReference>
<dbReference type="RefSeq" id="WP_012267968.1">
    <property type="nucleotide sequence ID" value="NC_010296.1"/>
</dbReference>
<dbReference type="SMR" id="B0JI03"/>
<dbReference type="STRING" id="449447.MAE_57430"/>
<dbReference type="PaxDb" id="449447-MAE_57430"/>
<dbReference type="EnsemblBacteria" id="BAG05565">
    <property type="protein sequence ID" value="BAG05565"/>
    <property type="gene ID" value="MAE_57430"/>
</dbReference>
<dbReference type="KEGG" id="mar:MAE_57430"/>
<dbReference type="PATRIC" id="fig|449447.4.peg.5252"/>
<dbReference type="eggNOG" id="COG0087">
    <property type="taxonomic scope" value="Bacteria"/>
</dbReference>
<dbReference type="HOGENOM" id="CLU_044142_4_1_3"/>
<dbReference type="BioCyc" id="MAER449447:MAE_RS25030-MONOMER"/>
<dbReference type="Proteomes" id="UP000001510">
    <property type="component" value="Chromosome"/>
</dbReference>
<dbReference type="GO" id="GO:0022625">
    <property type="term" value="C:cytosolic large ribosomal subunit"/>
    <property type="evidence" value="ECO:0007669"/>
    <property type="project" value="TreeGrafter"/>
</dbReference>
<dbReference type="GO" id="GO:0019843">
    <property type="term" value="F:rRNA binding"/>
    <property type="evidence" value="ECO:0007669"/>
    <property type="project" value="UniProtKB-UniRule"/>
</dbReference>
<dbReference type="GO" id="GO:0003735">
    <property type="term" value="F:structural constituent of ribosome"/>
    <property type="evidence" value="ECO:0007669"/>
    <property type="project" value="InterPro"/>
</dbReference>
<dbReference type="GO" id="GO:0006412">
    <property type="term" value="P:translation"/>
    <property type="evidence" value="ECO:0007669"/>
    <property type="project" value="UniProtKB-UniRule"/>
</dbReference>
<dbReference type="FunFam" id="3.30.160.810:FF:000001">
    <property type="entry name" value="50S ribosomal protein L3"/>
    <property type="match status" value="1"/>
</dbReference>
<dbReference type="FunFam" id="2.40.30.10:FF:000065">
    <property type="entry name" value="50S ribosomal protein L3, chloroplastic"/>
    <property type="match status" value="1"/>
</dbReference>
<dbReference type="Gene3D" id="3.30.160.810">
    <property type="match status" value="1"/>
</dbReference>
<dbReference type="Gene3D" id="2.40.30.10">
    <property type="entry name" value="Translation factors"/>
    <property type="match status" value="1"/>
</dbReference>
<dbReference type="HAMAP" id="MF_01325_B">
    <property type="entry name" value="Ribosomal_uL3_B"/>
    <property type="match status" value="1"/>
</dbReference>
<dbReference type="InterPro" id="IPR000597">
    <property type="entry name" value="Ribosomal_uL3"/>
</dbReference>
<dbReference type="InterPro" id="IPR019927">
    <property type="entry name" value="Ribosomal_uL3_bac/org-type"/>
</dbReference>
<dbReference type="InterPro" id="IPR019926">
    <property type="entry name" value="Ribosomal_uL3_CS"/>
</dbReference>
<dbReference type="InterPro" id="IPR009000">
    <property type="entry name" value="Transl_B-barrel_sf"/>
</dbReference>
<dbReference type="NCBIfam" id="TIGR03625">
    <property type="entry name" value="L3_bact"/>
    <property type="match status" value="1"/>
</dbReference>
<dbReference type="PANTHER" id="PTHR11229">
    <property type="entry name" value="50S RIBOSOMAL PROTEIN L3"/>
    <property type="match status" value="1"/>
</dbReference>
<dbReference type="PANTHER" id="PTHR11229:SF16">
    <property type="entry name" value="LARGE RIBOSOMAL SUBUNIT PROTEIN UL3C"/>
    <property type="match status" value="1"/>
</dbReference>
<dbReference type="Pfam" id="PF00297">
    <property type="entry name" value="Ribosomal_L3"/>
    <property type="match status" value="1"/>
</dbReference>
<dbReference type="SUPFAM" id="SSF50447">
    <property type="entry name" value="Translation proteins"/>
    <property type="match status" value="1"/>
</dbReference>
<dbReference type="PROSITE" id="PS00474">
    <property type="entry name" value="RIBOSOMAL_L3"/>
    <property type="match status" value="1"/>
</dbReference>
<sequence>MSIGILGTKLGMTQIFDNKTGVAIPVTVVQAGPCPVTQVKTKKTDGYESIQVGYKTVKEKALNKPLLGHLAKAGVSPLRHLIEYRLEDASAYTLGQEITADIFQEGDLVDVAGTTIGRGFSGYQKRHNFKRGNMTHGSKNHRLPGSTGAGTTPGRVFPGKRMAGQYGSTQVTIRKLSVVKIDSERNLILIKGAVPGKPGTLLNITPAKKFGK</sequence>